<sequence>MSVYGLQRLYIAGAHADATSGKTFDTFDPATGELLARVQQASADDVDRAVASAREGQREWAAMTAMQRSRILRRAVELLRERNDALAELEMRDTGKPIAETRAVDIVTGADVIEYYAGLATAIEGLQVPLRPESFVYTRREPLGVCAGIGAWNYPIQIACWKSAPALAAGNAMIFKPSEVTPLSALKLAEIYTEAGVPAGVFNVVQGDGSVGALLSAHPGIAKVSFTGGVETGKKVMSLAGASSLKEVTMELGGKSPLIVFDDADLDRAADIAVTANFFSAGQVCTNGTRVFVQQAVKDAFVERVLARVARIRVGKPSDSDTNFGPLASAAQLDKVLGYIDSGKAEGAKLLAGGARLVNDHFASGQYVAPTVFGDCRDDMRIVREEIFGPVMSILSFETEDEAIARANATDYGLAAGVVTENLSRAHRAIHRLEAGICWINTWGESPAEMPVGGYKQSGVGRENGITTLEHYTRIKSVQVELGRYQPVF</sequence>
<gene>
    <name evidence="1" type="primary">betB</name>
    <name type="ordered locus">BURPS1710b_A0376</name>
</gene>
<dbReference type="EC" id="1.2.1.8" evidence="1"/>
<dbReference type="EMBL" id="CP000125">
    <property type="protein sequence ID" value="ABA51910.1"/>
    <property type="molecule type" value="Genomic_DNA"/>
</dbReference>
<dbReference type="RefSeq" id="WP_004528662.1">
    <property type="nucleotide sequence ID" value="NC_007435.1"/>
</dbReference>
<dbReference type="PDB" id="6WSA">
    <property type="method" value="X-ray"/>
    <property type="resolution" value="2.05 A"/>
    <property type="chains" value="A=1-489"/>
</dbReference>
<dbReference type="PDB" id="6WSB">
    <property type="method" value="X-ray"/>
    <property type="resolution" value="1.55 A"/>
    <property type="chains" value="A/B=1-489"/>
</dbReference>
<dbReference type="PDBsum" id="6WSA"/>
<dbReference type="PDBsum" id="6WSB"/>
<dbReference type="SMR" id="Q3JLL8"/>
<dbReference type="EnsemblBacteria" id="ABA51910">
    <property type="protein sequence ID" value="ABA51910"/>
    <property type="gene ID" value="BURPS1710b_A0376"/>
</dbReference>
<dbReference type="KEGG" id="bpm:BURPS1710b_A0376"/>
<dbReference type="HOGENOM" id="CLU_005391_0_0_4"/>
<dbReference type="UniPathway" id="UPA00529">
    <property type="reaction ID" value="UER00386"/>
</dbReference>
<dbReference type="Proteomes" id="UP000002700">
    <property type="component" value="Chromosome II"/>
</dbReference>
<dbReference type="GO" id="GO:0008802">
    <property type="term" value="F:betaine-aldehyde dehydrogenase (NAD+) activity"/>
    <property type="evidence" value="ECO:0007669"/>
    <property type="project" value="UniProtKB-UniRule"/>
</dbReference>
<dbReference type="GO" id="GO:0046872">
    <property type="term" value="F:metal ion binding"/>
    <property type="evidence" value="ECO:0007669"/>
    <property type="project" value="UniProtKB-KW"/>
</dbReference>
<dbReference type="GO" id="GO:0019285">
    <property type="term" value="P:glycine betaine biosynthetic process from choline"/>
    <property type="evidence" value="ECO:0007669"/>
    <property type="project" value="UniProtKB-UniRule"/>
</dbReference>
<dbReference type="CDD" id="cd07090">
    <property type="entry name" value="ALDH_F9_TMBADH"/>
    <property type="match status" value="1"/>
</dbReference>
<dbReference type="FunFam" id="3.40.309.10:FF:000014">
    <property type="entry name" value="NAD/NADP-dependent betaine aldehyde dehydrogenase"/>
    <property type="match status" value="1"/>
</dbReference>
<dbReference type="FunFam" id="3.40.605.10:FF:000007">
    <property type="entry name" value="NAD/NADP-dependent betaine aldehyde dehydrogenase"/>
    <property type="match status" value="1"/>
</dbReference>
<dbReference type="Gene3D" id="3.40.605.10">
    <property type="entry name" value="Aldehyde Dehydrogenase, Chain A, domain 1"/>
    <property type="match status" value="1"/>
</dbReference>
<dbReference type="Gene3D" id="3.40.309.10">
    <property type="entry name" value="Aldehyde Dehydrogenase, Chain A, domain 2"/>
    <property type="match status" value="1"/>
</dbReference>
<dbReference type="HAMAP" id="MF_00804">
    <property type="entry name" value="BADH"/>
    <property type="match status" value="1"/>
</dbReference>
<dbReference type="InterPro" id="IPR016161">
    <property type="entry name" value="Ald_DH/histidinol_DH"/>
</dbReference>
<dbReference type="InterPro" id="IPR016163">
    <property type="entry name" value="Ald_DH_C"/>
</dbReference>
<dbReference type="InterPro" id="IPR016160">
    <property type="entry name" value="Ald_DH_CS_CYS"/>
</dbReference>
<dbReference type="InterPro" id="IPR029510">
    <property type="entry name" value="Ald_DH_CS_GLU"/>
</dbReference>
<dbReference type="InterPro" id="IPR016162">
    <property type="entry name" value="Ald_DH_N"/>
</dbReference>
<dbReference type="InterPro" id="IPR015590">
    <property type="entry name" value="Aldehyde_DH_dom"/>
</dbReference>
<dbReference type="InterPro" id="IPR011264">
    <property type="entry name" value="BADH"/>
</dbReference>
<dbReference type="NCBIfam" id="TIGR01804">
    <property type="entry name" value="BADH"/>
    <property type="match status" value="1"/>
</dbReference>
<dbReference type="NCBIfam" id="NF009725">
    <property type="entry name" value="PRK13252.1"/>
    <property type="match status" value="1"/>
</dbReference>
<dbReference type="PANTHER" id="PTHR11699">
    <property type="entry name" value="ALDEHYDE DEHYDROGENASE-RELATED"/>
    <property type="match status" value="1"/>
</dbReference>
<dbReference type="Pfam" id="PF00171">
    <property type="entry name" value="Aldedh"/>
    <property type="match status" value="1"/>
</dbReference>
<dbReference type="SUPFAM" id="SSF53720">
    <property type="entry name" value="ALDH-like"/>
    <property type="match status" value="1"/>
</dbReference>
<dbReference type="PROSITE" id="PS00070">
    <property type="entry name" value="ALDEHYDE_DEHYDR_CYS"/>
    <property type="match status" value="1"/>
</dbReference>
<dbReference type="PROSITE" id="PS00687">
    <property type="entry name" value="ALDEHYDE_DEHYDR_GLU"/>
    <property type="match status" value="1"/>
</dbReference>
<reference key="1">
    <citation type="journal article" date="2010" name="Genome Biol. Evol.">
        <title>Continuing evolution of Burkholderia mallei through genome reduction and large-scale rearrangements.</title>
        <authorList>
            <person name="Losada L."/>
            <person name="Ronning C.M."/>
            <person name="DeShazer D."/>
            <person name="Woods D."/>
            <person name="Fedorova N."/>
            <person name="Kim H.S."/>
            <person name="Shabalina S.A."/>
            <person name="Pearson T.R."/>
            <person name="Brinkac L."/>
            <person name="Tan P."/>
            <person name="Nandi T."/>
            <person name="Crabtree J."/>
            <person name="Badger J."/>
            <person name="Beckstrom-Sternberg S."/>
            <person name="Saqib M."/>
            <person name="Schutzer S.E."/>
            <person name="Keim P."/>
            <person name="Nierman W.C."/>
        </authorList>
    </citation>
    <scope>NUCLEOTIDE SEQUENCE [LARGE SCALE GENOMIC DNA]</scope>
    <source>
        <strain>1710b</strain>
    </source>
</reference>
<reference evidence="2" key="2">
    <citation type="submission" date="2020-04" db="PDB data bank">
        <title>Crystal structure of a betaine aldehyde dehydrogenase from Burkholderia pseudomallei bound to cofactor NAD.</title>
        <authorList>
            <person name="Edwards T.E."/>
            <person name="Dranow D.M."/>
            <person name="Abendroth J."/>
            <person name="Horanyi P.S."/>
            <person name="Lorimer D.D."/>
        </authorList>
    </citation>
    <scope>X-RAY CRYSTALLOGRAPHY (1.55 ANGSTROMS) IN COMPLEX WITH NAD</scope>
</reference>
<protein>
    <recommendedName>
        <fullName evidence="1">Betaine aldehyde dehydrogenase</fullName>
        <shortName evidence="1">BADH</shortName>
        <ecNumber evidence="1">1.2.1.8</ecNumber>
    </recommendedName>
</protein>
<comment type="function">
    <text evidence="1">Involved in the biosynthesis of the osmoprotectant glycine betaine. Catalyzes the irreversible oxidation of betaine aldehyde to the corresponding acid.</text>
</comment>
<comment type="catalytic activity">
    <reaction evidence="1">
        <text>betaine aldehyde + NAD(+) + H2O = glycine betaine + NADH + 2 H(+)</text>
        <dbReference type="Rhea" id="RHEA:15305"/>
        <dbReference type="ChEBI" id="CHEBI:15377"/>
        <dbReference type="ChEBI" id="CHEBI:15378"/>
        <dbReference type="ChEBI" id="CHEBI:15710"/>
        <dbReference type="ChEBI" id="CHEBI:17750"/>
        <dbReference type="ChEBI" id="CHEBI:57540"/>
        <dbReference type="ChEBI" id="CHEBI:57945"/>
        <dbReference type="EC" id="1.2.1.8"/>
    </reaction>
    <physiologicalReaction direction="left-to-right" evidence="1">
        <dbReference type="Rhea" id="RHEA:15306"/>
    </physiologicalReaction>
</comment>
<comment type="cofactor">
    <cofactor evidence="1">
        <name>K(+)</name>
        <dbReference type="ChEBI" id="CHEBI:29103"/>
    </cofactor>
    <text evidence="1">Binds 2 potassium ions per subunit.</text>
</comment>
<comment type="pathway">
    <text evidence="1">Amine and polyamine biosynthesis; betaine biosynthesis via choline pathway; betaine from betaine aldehyde: step 1/1.</text>
</comment>
<comment type="subunit">
    <text evidence="1">Dimer of dimers.</text>
</comment>
<comment type="similarity">
    <text evidence="1">Belongs to the aldehyde dehydrogenase family.</text>
</comment>
<proteinExistence type="evidence at protein level"/>
<name>BETB_BURP1</name>
<organism>
    <name type="scientific">Burkholderia pseudomallei (strain 1710b)</name>
    <dbReference type="NCBI Taxonomy" id="320372"/>
    <lineage>
        <taxon>Bacteria</taxon>
        <taxon>Pseudomonadati</taxon>
        <taxon>Pseudomonadota</taxon>
        <taxon>Betaproteobacteria</taxon>
        <taxon>Burkholderiales</taxon>
        <taxon>Burkholderiaceae</taxon>
        <taxon>Burkholderia</taxon>
        <taxon>pseudomallei group</taxon>
    </lineage>
</organism>
<keyword id="KW-0002">3D-structure</keyword>
<keyword id="KW-0479">Metal-binding</keyword>
<keyword id="KW-0520">NAD</keyword>
<keyword id="KW-0521">NADP</keyword>
<keyword id="KW-0558">Oxidation</keyword>
<keyword id="KW-0560">Oxidoreductase</keyword>
<keyword id="KW-0630">Potassium</keyword>
<evidence type="ECO:0000255" key="1">
    <source>
        <dbReference type="HAMAP-Rule" id="MF_00804"/>
    </source>
</evidence>
<evidence type="ECO:0007744" key="2">
    <source>
        <dbReference type="PDB" id="6WSB"/>
    </source>
</evidence>
<evidence type="ECO:0007829" key="3">
    <source>
        <dbReference type="PDB" id="6WSB"/>
    </source>
</evidence>
<feature type="chain" id="PRO_1000047038" description="Betaine aldehyde dehydrogenase">
    <location>
        <begin position="1"/>
        <end position="489"/>
    </location>
</feature>
<feature type="active site" description="Charge relay system" evidence="1">
    <location>
        <position position="162"/>
    </location>
</feature>
<feature type="active site" description="Proton acceptor" evidence="1">
    <location>
        <position position="251"/>
    </location>
</feature>
<feature type="active site" description="Nucleophile" evidence="1">
    <location>
        <position position="285"/>
    </location>
</feature>
<feature type="active site" description="Charge relay system" evidence="1">
    <location>
        <position position="463"/>
    </location>
</feature>
<feature type="binding site" evidence="1">
    <location>
        <position position="26"/>
    </location>
    <ligand>
        <name>K(+)</name>
        <dbReference type="ChEBI" id="CHEBI:29103"/>
        <label>1</label>
    </ligand>
</feature>
<feature type="binding site" evidence="1">
    <location>
        <position position="93"/>
    </location>
    <ligand>
        <name>K(+)</name>
        <dbReference type="ChEBI" id="CHEBI:29103"/>
        <label>1</label>
    </ligand>
</feature>
<feature type="binding site" evidence="1 2">
    <location>
        <begin position="150"/>
        <end position="152"/>
    </location>
    <ligand>
        <name>NAD(+)</name>
        <dbReference type="ChEBI" id="CHEBI:57540"/>
    </ligand>
</feature>
<feature type="binding site" evidence="1 2">
    <location>
        <begin position="176"/>
        <end position="179"/>
    </location>
    <ligand>
        <name>NAD(+)</name>
        <dbReference type="ChEBI" id="CHEBI:57540"/>
    </ligand>
</feature>
<feature type="binding site" evidence="1">
    <location>
        <position position="180"/>
    </location>
    <ligand>
        <name>K(+)</name>
        <dbReference type="ChEBI" id="CHEBI:29103"/>
        <label>1</label>
    </ligand>
</feature>
<feature type="binding site" evidence="1 2">
    <location>
        <begin position="229"/>
        <end position="232"/>
    </location>
    <ligand>
        <name>NAD(+)</name>
        <dbReference type="ChEBI" id="CHEBI:57540"/>
    </ligand>
</feature>
<feature type="binding site" evidence="1">
    <location>
        <position position="245"/>
    </location>
    <ligand>
        <name>K(+)</name>
        <dbReference type="ChEBI" id="CHEBI:29103"/>
        <label>2</label>
    </ligand>
</feature>
<feature type="binding site" evidence="1 2">
    <location>
        <position position="253"/>
    </location>
    <ligand>
        <name>NAD(+)</name>
        <dbReference type="ChEBI" id="CHEBI:57540"/>
    </ligand>
</feature>
<feature type="binding site" description="covalent" evidence="1 2">
    <location>
        <position position="285"/>
    </location>
    <ligand>
        <name>NAD(+)</name>
        <dbReference type="ChEBI" id="CHEBI:57540"/>
    </ligand>
</feature>
<feature type="binding site" evidence="1 2">
    <location>
        <position position="386"/>
    </location>
    <ligand>
        <name>NAD(+)</name>
        <dbReference type="ChEBI" id="CHEBI:57540"/>
    </ligand>
</feature>
<feature type="binding site" evidence="1">
    <location>
        <position position="456"/>
    </location>
    <ligand>
        <name>K(+)</name>
        <dbReference type="ChEBI" id="CHEBI:29103"/>
        <label>2</label>
    </ligand>
</feature>
<feature type="binding site" evidence="1">
    <location>
        <position position="459"/>
    </location>
    <ligand>
        <name>K(+)</name>
        <dbReference type="ChEBI" id="CHEBI:29103"/>
        <label>2</label>
    </ligand>
</feature>
<feature type="site" description="Seems to be a necessary countercharge to the potassium cations" evidence="1">
    <location>
        <position position="247"/>
    </location>
</feature>
<feature type="modified residue" description="Cysteine sulfenic acid (-SOH)" evidence="1">
    <location>
        <position position="285"/>
    </location>
</feature>
<feature type="strand" evidence="3">
    <location>
        <begin position="9"/>
        <end position="11"/>
    </location>
</feature>
<feature type="strand" evidence="3">
    <location>
        <begin position="14"/>
        <end position="16"/>
    </location>
</feature>
<feature type="strand" evidence="3">
    <location>
        <begin position="19"/>
        <end position="21"/>
    </location>
</feature>
<feature type="strand" evidence="3">
    <location>
        <begin position="23"/>
        <end position="27"/>
    </location>
</feature>
<feature type="turn" evidence="3">
    <location>
        <begin position="29"/>
        <end position="31"/>
    </location>
</feature>
<feature type="strand" evidence="3">
    <location>
        <begin position="34"/>
        <end position="39"/>
    </location>
</feature>
<feature type="helix" evidence="3">
    <location>
        <begin position="43"/>
        <end position="62"/>
    </location>
</feature>
<feature type="helix" evidence="3">
    <location>
        <begin position="65"/>
        <end position="81"/>
    </location>
</feature>
<feature type="helix" evidence="3">
    <location>
        <begin position="83"/>
        <end position="94"/>
    </location>
</feature>
<feature type="helix" evidence="3">
    <location>
        <begin position="98"/>
        <end position="103"/>
    </location>
</feature>
<feature type="helix" evidence="3">
    <location>
        <begin position="105"/>
        <end position="119"/>
    </location>
</feature>
<feature type="helix" evidence="3">
    <location>
        <begin position="120"/>
        <end position="122"/>
    </location>
</feature>
<feature type="strand" evidence="3">
    <location>
        <begin position="127"/>
        <end position="131"/>
    </location>
</feature>
<feature type="strand" evidence="3">
    <location>
        <begin position="134"/>
        <end position="142"/>
    </location>
</feature>
<feature type="strand" evidence="3">
    <location>
        <begin position="144"/>
        <end position="149"/>
    </location>
</feature>
<feature type="strand" evidence="3">
    <location>
        <begin position="152"/>
        <end position="154"/>
    </location>
</feature>
<feature type="helix" evidence="3">
    <location>
        <begin position="155"/>
        <end position="168"/>
    </location>
</feature>
<feature type="strand" evidence="3">
    <location>
        <begin position="172"/>
        <end position="176"/>
    </location>
</feature>
<feature type="helix" evidence="3">
    <location>
        <begin position="184"/>
        <end position="195"/>
    </location>
</feature>
<feature type="strand" evidence="3">
    <location>
        <begin position="201"/>
        <end position="204"/>
    </location>
</feature>
<feature type="helix" evidence="3">
    <location>
        <begin position="209"/>
        <end position="217"/>
    </location>
</feature>
<feature type="strand" evidence="3">
    <location>
        <begin position="223"/>
        <end position="228"/>
    </location>
</feature>
<feature type="helix" evidence="3">
    <location>
        <begin position="230"/>
        <end position="244"/>
    </location>
</feature>
<feature type="strand" evidence="3">
    <location>
        <begin position="247"/>
        <end position="251"/>
    </location>
</feature>
<feature type="strand" evidence="3">
    <location>
        <begin position="257"/>
        <end position="260"/>
    </location>
</feature>
<feature type="helix" evidence="3">
    <location>
        <begin position="266"/>
        <end position="278"/>
    </location>
</feature>
<feature type="helix" evidence="3">
    <location>
        <begin position="279"/>
        <end position="282"/>
    </location>
</feature>
<feature type="strand" evidence="3">
    <location>
        <begin position="290"/>
        <end position="294"/>
    </location>
</feature>
<feature type="helix" evidence="3">
    <location>
        <begin position="295"/>
        <end position="297"/>
    </location>
</feature>
<feature type="helix" evidence="3">
    <location>
        <begin position="298"/>
        <end position="310"/>
    </location>
</feature>
<feature type="helix" evidence="3">
    <location>
        <begin position="330"/>
        <end position="346"/>
    </location>
</feature>
<feature type="strand" evidence="3">
    <location>
        <begin position="349"/>
        <end position="352"/>
    </location>
</feature>
<feature type="helix" evidence="3">
    <location>
        <begin position="360"/>
        <end position="364"/>
    </location>
</feature>
<feature type="strand" evidence="3">
    <location>
        <begin position="371"/>
        <end position="375"/>
    </location>
</feature>
<feature type="helix" evidence="3">
    <location>
        <begin position="381"/>
        <end position="384"/>
    </location>
</feature>
<feature type="strand" evidence="3">
    <location>
        <begin position="389"/>
        <end position="398"/>
    </location>
</feature>
<feature type="helix" evidence="3">
    <location>
        <begin position="400"/>
        <end position="408"/>
    </location>
</feature>
<feature type="strand" evidence="3">
    <location>
        <begin position="414"/>
        <end position="419"/>
    </location>
</feature>
<feature type="helix" evidence="3">
    <location>
        <begin position="423"/>
        <end position="432"/>
    </location>
</feature>
<feature type="strand" evidence="3">
    <location>
        <begin position="436"/>
        <end position="441"/>
    </location>
</feature>
<feature type="helix" evidence="3">
    <location>
        <begin position="456"/>
        <end position="458"/>
    </location>
</feature>
<feature type="strand" evidence="3">
    <location>
        <begin position="459"/>
        <end position="461"/>
    </location>
</feature>
<feature type="helix" evidence="3">
    <location>
        <begin position="465"/>
        <end position="470"/>
    </location>
</feature>
<feature type="strand" evidence="3">
    <location>
        <begin position="473"/>
        <end position="481"/>
    </location>
</feature>
<accession>Q3JLL8</accession>